<evidence type="ECO:0000255" key="1">
    <source>
        <dbReference type="HAMAP-Rule" id="MF_00636"/>
    </source>
</evidence>
<comment type="function">
    <text evidence="1">Displays ATPase and GTPase activities.</text>
</comment>
<comment type="similarity">
    <text evidence="1">Belongs to the RapZ-like family.</text>
</comment>
<protein>
    <recommendedName>
        <fullName evidence="1">Nucleotide-binding protein KRH_12070</fullName>
    </recommendedName>
</protein>
<keyword id="KW-0067">ATP-binding</keyword>
<keyword id="KW-0342">GTP-binding</keyword>
<keyword id="KW-0547">Nucleotide-binding</keyword>
<keyword id="KW-1185">Reference proteome</keyword>
<accession>B2GH81</accession>
<name>Y1207_KOCRD</name>
<sequence>MSTPPPDAAPTLEPVKPPTAELLIVTGMSGAGRSTAANALEDLGWYVVDNLPPQMLGTLADLASRTPQSLPKLAVVIDVRGKALFNDMKETLAALEHSGVEFSVLFLEASDEVLVSRYELQRRPHPLQAGGRILDGIRAERELLKDLRETADSVLDTTSFNVHALTRAVADMFSTSGPVVLRLTVMSFGFKYGVPADANFVADVRFIPNPHWVPALRPRTGKDPEVRDYVFATDGAQTFVDRFVSMLEPVFAGYRTESKHYATIAIGCTGGKHRSVAITEEVARRLSKSPRVTVNLQHRDMGRE</sequence>
<proteinExistence type="inferred from homology"/>
<reference key="1">
    <citation type="journal article" date="2008" name="J. Bacteriol.">
        <title>Complete genome sequence of the soil actinomycete Kocuria rhizophila.</title>
        <authorList>
            <person name="Takarada H."/>
            <person name="Sekine M."/>
            <person name="Kosugi H."/>
            <person name="Matsuo Y."/>
            <person name="Fujisawa T."/>
            <person name="Omata S."/>
            <person name="Kishi E."/>
            <person name="Shimizu A."/>
            <person name="Tsukatani N."/>
            <person name="Tanikawa S."/>
            <person name="Fujita N."/>
            <person name="Harayama S."/>
        </authorList>
    </citation>
    <scope>NUCLEOTIDE SEQUENCE [LARGE SCALE GENOMIC DNA]</scope>
    <source>
        <strain>ATCC 9341 / DSM 348 / NBRC 103217 / DC2201</strain>
    </source>
</reference>
<organism>
    <name type="scientific">Kocuria rhizophila (strain ATCC 9341 / DSM 348 / NBRC 103217 / DC2201)</name>
    <dbReference type="NCBI Taxonomy" id="378753"/>
    <lineage>
        <taxon>Bacteria</taxon>
        <taxon>Bacillati</taxon>
        <taxon>Actinomycetota</taxon>
        <taxon>Actinomycetes</taxon>
        <taxon>Micrococcales</taxon>
        <taxon>Micrococcaceae</taxon>
        <taxon>Kocuria</taxon>
    </lineage>
</organism>
<feature type="chain" id="PRO_0000383255" description="Nucleotide-binding protein KRH_12070">
    <location>
        <begin position="1"/>
        <end position="304"/>
    </location>
</feature>
<feature type="binding site" evidence="1">
    <location>
        <begin position="27"/>
        <end position="34"/>
    </location>
    <ligand>
        <name>ATP</name>
        <dbReference type="ChEBI" id="CHEBI:30616"/>
    </ligand>
</feature>
<feature type="binding site" evidence="1">
    <location>
        <begin position="78"/>
        <end position="81"/>
    </location>
    <ligand>
        <name>GTP</name>
        <dbReference type="ChEBI" id="CHEBI:37565"/>
    </ligand>
</feature>
<dbReference type="EMBL" id="AP009152">
    <property type="protein sequence ID" value="BAG29554.1"/>
    <property type="molecule type" value="Genomic_DNA"/>
</dbReference>
<dbReference type="SMR" id="B2GH81"/>
<dbReference type="STRING" id="378753.KRH_12070"/>
<dbReference type="KEGG" id="krh:KRH_12070"/>
<dbReference type="eggNOG" id="COG1660">
    <property type="taxonomic scope" value="Bacteria"/>
</dbReference>
<dbReference type="HOGENOM" id="CLU_059558_0_0_11"/>
<dbReference type="OrthoDB" id="9784461at2"/>
<dbReference type="Proteomes" id="UP000008838">
    <property type="component" value="Chromosome"/>
</dbReference>
<dbReference type="GO" id="GO:0005524">
    <property type="term" value="F:ATP binding"/>
    <property type="evidence" value="ECO:0007669"/>
    <property type="project" value="UniProtKB-UniRule"/>
</dbReference>
<dbReference type="GO" id="GO:0005525">
    <property type="term" value="F:GTP binding"/>
    <property type="evidence" value="ECO:0007669"/>
    <property type="project" value="UniProtKB-UniRule"/>
</dbReference>
<dbReference type="Gene3D" id="3.40.50.300">
    <property type="entry name" value="P-loop containing nucleotide triphosphate hydrolases"/>
    <property type="match status" value="1"/>
</dbReference>
<dbReference type="HAMAP" id="MF_00636">
    <property type="entry name" value="RapZ_like"/>
    <property type="match status" value="1"/>
</dbReference>
<dbReference type="InterPro" id="IPR027417">
    <property type="entry name" value="P-loop_NTPase"/>
</dbReference>
<dbReference type="InterPro" id="IPR005337">
    <property type="entry name" value="RapZ-like"/>
</dbReference>
<dbReference type="InterPro" id="IPR053930">
    <property type="entry name" value="RapZ-like_N"/>
</dbReference>
<dbReference type="InterPro" id="IPR053931">
    <property type="entry name" value="RapZ_C"/>
</dbReference>
<dbReference type="NCBIfam" id="NF003828">
    <property type="entry name" value="PRK05416.1"/>
    <property type="match status" value="1"/>
</dbReference>
<dbReference type="PANTHER" id="PTHR30448">
    <property type="entry name" value="RNASE ADAPTER PROTEIN RAPZ"/>
    <property type="match status" value="1"/>
</dbReference>
<dbReference type="PANTHER" id="PTHR30448:SF0">
    <property type="entry name" value="RNASE ADAPTER PROTEIN RAPZ"/>
    <property type="match status" value="1"/>
</dbReference>
<dbReference type="Pfam" id="PF22740">
    <property type="entry name" value="PapZ_C"/>
    <property type="match status" value="1"/>
</dbReference>
<dbReference type="Pfam" id="PF03668">
    <property type="entry name" value="RapZ-like_N"/>
    <property type="match status" value="1"/>
</dbReference>
<dbReference type="PIRSF" id="PIRSF005052">
    <property type="entry name" value="P-loopkin"/>
    <property type="match status" value="1"/>
</dbReference>
<dbReference type="SUPFAM" id="SSF52540">
    <property type="entry name" value="P-loop containing nucleoside triphosphate hydrolases"/>
    <property type="match status" value="1"/>
</dbReference>
<gene>
    <name type="ordered locus">KRH_12070</name>
</gene>